<feature type="peptide" id="PRO_0000043930" description="Glucagon">
    <location>
        <begin position="1"/>
        <end position="29"/>
    </location>
</feature>
<organism>
    <name type="scientific">Trachemys scripta</name>
    <name type="common">Red-eared slider turtle</name>
    <name type="synonym">Pseudemys scripta</name>
    <dbReference type="NCBI Taxonomy" id="34903"/>
    <lineage>
        <taxon>Eukaryota</taxon>
        <taxon>Metazoa</taxon>
        <taxon>Chordata</taxon>
        <taxon>Craniata</taxon>
        <taxon>Vertebrata</taxon>
        <taxon>Euteleostomi</taxon>
        <taxon>Archelosauria</taxon>
        <taxon>Testudinata</taxon>
        <taxon>Testudines</taxon>
        <taxon>Cryptodira</taxon>
        <taxon>Durocryptodira</taxon>
        <taxon>Testudinoidea</taxon>
        <taxon>Emydidae</taxon>
        <taxon>Trachemys</taxon>
    </lineage>
</organism>
<proteinExistence type="evidence at protein level"/>
<reference key="1">
    <citation type="journal article" date="1990" name="Peptides">
        <title>Isolation and structural characterization of insulin, glucagon and somatostatin from the turtle, Pseudemys scripta.</title>
        <authorList>
            <person name="Conlon J.M."/>
            <person name="Hicks J.W."/>
        </authorList>
    </citation>
    <scope>PROTEIN SEQUENCE</scope>
</reference>
<evidence type="ECO:0000305" key="1"/>
<sequence length="29" mass="3470">HSQGTFTSDYSKYLDTRRAQDFVQWLMST</sequence>
<dbReference type="PIR" id="B60414">
    <property type="entry name" value="GCTTS"/>
</dbReference>
<dbReference type="SMR" id="P68955"/>
<dbReference type="GO" id="GO:0005576">
    <property type="term" value="C:extracellular region"/>
    <property type="evidence" value="ECO:0007669"/>
    <property type="project" value="UniProtKB-SubCell"/>
</dbReference>
<dbReference type="GO" id="GO:0005179">
    <property type="term" value="F:hormone activity"/>
    <property type="evidence" value="ECO:0007669"/>
    <property type="project" value="UniProtKB-KW"/>
</dbReference>
<dbReference type="Gene3D" id="6.10.250.590">
    <property type="match status" value="1"/>
</dbReference>
<dbReference type="InterPro" id="IPR015550">
    <property type="entry name" value="Glucagon"/>
</dbReference>
<dbReference type="InterPro" id="IPR000532">
    <property type="entry name" value="Glucagon_GIP_secretin_VIP"/>
</dbReference>
<dbReference type="PANTHER" id="PTHR11418">
    <property type="entry name" value="GLUCAGON"/>
    <property type="match status" value="1"/>
</dbReference>
<dbReference type="PANTHER" id="PTHR11418:SF0">
    <property type="entry name" value="PRO-GLUCAGON"/>
    <property type="match status" value="1"/>
</dbReference>
<dbReference type="Pfam" id="PF00123">
    <property type="entry name" value="Hormone_2"/>
    <property type="match status" value="1"/>
</dbReference>
<dbReference type="PRINTS" id="PR00275">
    <property type="entry name" value="GLUCAGON"/>
</dbReference>
<dbReference type="SMART" id="SM00070">
    <property type="entry name" value="GLUCA"/>
    <property type="match status" value="1"/>
</dbReference>
<dbReference type="PROSITE" id="PS00260">
    <property type="entry name" value="GLUCAGON"/>
    <property type="match status" value="1"/>
</dbReference>
<accession>P68955</accession>
<accession>P01276</accession>
<protein>
    <recommendedName>
        <fullName>Glucagon</fullName>
    </recommendedName>
</protein>
<keyword id="KW-0903">Direct protein sequencing</keyword>
<keyword id="KW-0372">Hormone</keyword>
<keyword id="KW-0964">Secreted</keyword>
<gene>
    <name type="primary">GCG</name>
</gene>
<name>GLUC_TRASC</name>
<comment type="function">
    <text>Glucagon plays a key role in glucose metabolism and homeostasis. Regulates blood glucose by increasing gluconeogenesis and decreasing glycolysis.</text>
</comment>
<comment type="subcellular location">
    <subcellularLocation>
        <location>Secreted</location>
    </subcellularLocation>
</comment>
<comment type="induction">
    <text>Produced in the A cells of the islets of Langerhans in response to a drop in blood sugar concentration.</text>
</comment>
<comment type="similarity">
    <text evidence="1">Belongs to the glucagon family.</text>
</comment>